<sequence>MTEKKYIVALDQGTTSSRAVVMDHDANIISVSQREFEQIYPKPGWVEHDPMEIWATQSSTLVEVLAKADISSDQIAAIGITNQRETTIVWEKETGKPIYNAIVWQCRRTAEICEHLKRDGLEDYIRSNTGLVIDPYFSGTKVKWILDHVEGSRERARRGELLFGTVDTWLIWKMTQGRVHVTDYTNASRTMLFNIHTLDWDDKMLEVLDIPREMLPEVRRSSEVYGQTNIGGKGGTRIPISGIAGDQQAALFGQLCVKEGMAKNTYGTGCFMLMNTGEKAVKSENGLLTTIACGPTGEVNYALEGAVFMAGASIQWLRDEMKLINDAYDSEYFATKVQNTNGVYVVPAFTGLGAPYWDPYARGAIFGLTRGVNANHIIRATLESIAYQTRDVLEAMQADSGIRLHALRVDGGAVANNFLMQFQSDILGTRVERPEVREVTALGAAYLAGLAVGFWQNLDELQEKAVIEREFRPGIETTERNYRYAGWKKAVKRAMAWEEHDE</sequence>
<protein>
    <recommendedName>
        <fullName evidence="1">Glycerol kinase</fullName>
        <ecNumber evidence="1">2.7.1.30</ecNumber>
    </recommendedName>
    <alternativeName>
        <fullName evidence="1">ATP:glycerol 3-phosphotransferase</fullName>
    </alternativeName>
    <alternativeName>
        <fullName evidence="1">Glycerokinase</fullName>
        <shortName evidence="1">GK</shortName>
    </alternativeName>
</protein>
<comment type="function">
    <text evidence="1">Key enzyme in the regulation of glycerol uptake and metabolism. Catalyzes the phosphorylation of glycerol to yield sn-glycerol 3-phosphate.</text>
</comment>
<comment type="catalytic activity">
    <reaction evidence="1">
        <text>glycerol + ATP = sn-glycerol 3-phosphate + ADP + H(+)</text>
        <dbReference type="Rhea" id="RHEA:21644"/>
        <dbReference type="ChEBI" id="CHEBI:15378"/>
        <dbReference type="ChEBI" id="CHEBI:17754"/>
        <dbReference type="ChEBI" id="CHEBI:30616"/>
        <dbReference type="ChEBI" id="CHEBI:57597"/>
        <dbReference type="ChEBI" id="CHEBI:456216"/>
        <dbReference type="EC" id="2.7.1.30"/>
    </reaction>
</comment>
<comment type="activity regulation">
    <text evidence="1">Activity of this regulatory enzyme is affected by several metabolites. Allosterically and non-competitively inhibited by fructose 1,6-bisphosphate (FBP) and unphosphorylated phosphocarrier protein EIIA-Glc (III-Glc), an integral component of the bacterial phosphotransferase (PTS) system.</text>
</comment>
<comment type="pathway">
    <text evidence="1">Polyol metabolism; glycerol degradation via glycerol kinase pathway; sn-glycerol 3-phosphate from glycerol: step 1/1.</text>
</comment>
<comment type="subunit">
    <text evidence="1">Homotetramer and homodimer (in equilibrium). Heterodimer with EIIA-Glc. Binds 1 zinc ion per glycerol kinase EIIA-Glc dimer. The zinc ion is important for dimerization.</text>
</comment>
<comment type="similarity">
    <text evidence="1">Belongs to the FGGY kinase family.</text>
</comment>
<reference key="1">
    <citation type="journal article" date="2009" name="PLoS Genet.">
        <title>Organised genome dynamics in the Escherichia coli species results in highly diverse adaptive paths.</title>
        <authorList>
            <person name="Touchon M."/>
            <person name="Hoede C."/>
            <person name="Tenaillon O."/>
            <person name="Barbe V."/>
            <person name="Baeriswyl S."/>
            <person name="Bidet P."/>
            <person name="Bingen E."/>
            <person name="Bonacorsi S."/>
            <person name="Bouchier C."/>
            <person name="Bouvet O."/>
            <person name="Calteau A."/>
            <person name="Chiapello H."/>
            <person name="Clermont O."/>
            <person name="Cruveiller S."/>
            <person name="Danchin A."/>
            <person name="Diard M."/>
            <person name="Dossat C."/>
            <person name="Karoui M.E."/>
            <person name="Frapy E."/>
            <person name="Garry L."/>
            <person name="Ghigo J.M."/>
            <person name="Gilles A.M."/>
            <person name="Johnson J."/>
            <person name="Le Bouguenec C."/>
            <person name="Lescat M."/>
            <person name="Mangenot S."/>
            <person name="Martinez-Jehanne V."/>
            <person name="Matic I."/>
            <person name="Nassif X."/>
            <person name="Oztas S."/>
            <person name="Petit M.A."/>
            <person name="Pichon C."/>
            <person name="Rouy Z."/>
            <person name="Ruf C.S."/>
            <person name="Schneider D."/>
            <person name="Tourret J."/>
            <person name="Vacherie B."/>
            <person name="Vallenet D."/>
            <person name="Medigue C."/>
            <person name="Rocha E.P.C."/>
            <person name="Denamur E."/>
        </authorList>
    </citation>
    <scope>NUCLEOTIDE SEQUENCE [LARGE SCALE GENOMIC DNA]</scope>
    <source>
        <strain>S88 / ExPEC</strain>
    </source>
</reference>
<name>GLPK_ECO45</name>
<gene>
    <name evidence="1" type="primary">glpK</name>
    <name type="ordered locus">ECS88_4376</name>
</gene>
<dbReference type="EC" id="2.7.1.30" evidence="1"/>
<dbReference type="EMBL" id="CU928161">
    <property type="protein sequence ID" value="CAR05556.1"/>
    <property type="molecule type" value="Genomic_DNA"/>
</dbReference>
<dbReference type="RefSeq" id="WP_000136788.1">
    <property type="nucleotide sequence ID" value="NC_011742.1"/>
</dbReference>
<dbReference type="SMR" id="B7MI58"/>
<dbReference type="GeneID" id="75169366"/>
<dbReference type="KEGG" id="ecz:ECS88_4376"/>
<dbReference type="HOGENOM" id="CLU_009281_2_3_6"/>
<dbReference type="UniPathway" id="UPA00618">
    <property type="reaction ID" value="UER00672"/>
</dbReference>
<dbReference type="Proteomes" id="UP000000747">
    <property type="component" value="Chromosome"/>
</dbReference>
<dbReference type="GO" id="GO:0005829">
    <property type="term" value="C:cytosol"/>
    <property type="evidence" value="ECO:0007669"/>
    <property type="project" value="TreeGrafter"/>
</dbReference>
<dbReference type="GO" id="GO:0005524">
    <property type="term" value="F:ATP binding"/>
    <property type="evidence" value="ECO:0007669"/>
    <property type="project" value="UniProtKB-UniRule"/>
</dbReference>
<dbReference type="GO" id="GO:0004370">
    <property type="term" value="F:glycerol kinase activity"/>
    <property type="evidence" value="ECO:0000250"/>
    <property type="project" value="UniProtKB"/>
</dbReference>
<dbReference type="GO" id="GO:0046872">
    <property type="term" value="F:metal ion binding"/>
    <property type="evidence" value="ECO:0007669"/>
    <property type="project" value="UniProtKB-KW"/>
</dbReference>
<dbReference type="GO" id="GO:0019563">
    <property type="term" value="P:glycerol catabolic process"/>
    <property type="evidence" value="ECO:0007669"/>
    <property type="project" value="UniProtKB-UniRule"/>
</dbReference>
<dbReference type="GO" id="GO:0006071">
    <property type="term" value="P:glycerol metabolic process"/>
    <property type="evidence" value="ECO:0000250"/>
    <property type="project" value="UniProtKB"/>
</dbReference>
<dbReference type="GO" id="GO:0006072">
    <property type="term" value="P:glycerol-3-phosphate metabolic process"/>
    <property type="evidence" value="ECO:0007669"/>
    <property type="project" value="InterPro"/>
</dbReference>
<dbReference type="CDD" id="cd07786">
    <property type="entry name" value="FGGY_EcGK_like"/>
    <property type="match status" value="1"/>
</dbReference>
<dbReference type="FunFam" id="3.30.420.40:FF:000007">
    <property type="entry name" value="Glycerol kinase"/>
    <property type="match status" value="1"/>
</dbReference>
<dbReference type="FunFam" id="3.30.420.40:FF:000008">
    <property type="entry name" value="Glycerol kinase"/>
    <property type="match status" value="1"/>
</dbReference>
<dbReference type="Gene3D" id="3.30.420.40">
    <property type="match status" value="2"/>
</dbReference>
<dbReference type="HAMAP" id="MF_00186">
    <property type="entry name" value="Glycerol_kin"/>
    <property type="match status" value="1"/>
</dbReference>
<dbReference type="InterPro" id="IPR043129">
    <property type="entry name" value="ATPase_NBD"/>
</dbReference>
<dbReference type="InterPro" id="IPR000577">
    <property type="entry name" value="Carb_kinase_FGGY"/>
</dbReference>
<dbReference type="InterPro" id="IPR018483">
    <property type="entry name" value="Carb_kinase_FGGY_CS"/>
</dbReference>
<dbReference type="InterPro" id="IPR018485">
    <property type="entry name" value="FGGY_C"/>
</dbReference>
<dbReference type="InterPro" id="IPR018484">
    <property type="entry name" value="FGGY_N"/>
</dbReference>
<dbReference type="InterPro" id="IPR005999">
    <property type="entry name" value="Glycerol_kin"/>
</dbReference>
<dbReference type="NCBIfam" id="TIGR01311">
    <property type="entry name" value="glycerol_kin"/>
    <property type="match status" value="1"/>
</dbReference>
<dbReference type="NCBIfam" id="NF000756">
    <property type="entry name" value="PRK00047.1"/>
    <property type="match status" value="1"/>
</dbReference>
<dbReference type="PANTHER" id="PTHR10196:SF69">
    <property type="entry name" value="GLYCEROL KINASE"/>
    <property type="match status" value="1"/>
</dbReference>
<dbReference type="PANTHER" id="PTHR10196">
    <property type="entry name" value="SUGAR KINASE"/>
    <property type="match status" value="1"/>
</dbReference>
<dbReference type="Pfam" id="PF02782">
    <property type="entry name" value="FGGY_C"/>
    <property type="match status" value="1"/>
</dbReference>
<dbReference type="Pfam" id="PF00370">
    <property type="entry name" value="FGGY_N"/>
    <property type="match status" value="1"/>
</dbReference>
<dbReference type="PIRSF" id="PIRSF000538">
    <property type="entry name" value="GlpK"/>
    <property type="match status" value="1"/>
</dbReference>
<dbReference type="SUPFAM" id="SSF53067">
    <property type="entry name" value="Actin-like ATPase domain"/>
    <property type="match status" value="2"/>
</dbReference>
<dbReference type="PROSITE" id="PS00933">
    <property type="entry name" value="FGGY_KINASES_1"/>
    <property type="match status" value="1"/>
</dbReference>
<dbReference type="PROSITE" id="PS00445">
    <property type="entry name" value="FGGY_KINASES_2"/>
    <property type="match status" value="1"/>
</dbReference>
<accession>B7MI58</accession>
<evidence type="ECO:0000255" key="1">
    <source>
        <dbReference type="HAMAP-Rule" id="MF_00186"/>
    </source>
</evidence>
<feature type="chain" id="PRO_1000118549" description="Glycerol kinase">
    <location>
        <begin position="1"/>
        <end position="502"/>
    </location>
</feature>
<feature type="binding site" evidence="1">
    <location>
        <position position="14"/>
    </location>
    <ligand>
        <name>ADP</name>
        <dbReference type="ChEBI" id="CHEBI:456216"/>
    </ligand>
</feature>
<feature type="binding site" evidence="1">
    <location>
        <position position="14"/>
    </location>
    <ligand>
        <name>ATP</name>
        <dbReference type="ChEBI" id="CHEBI:30616"/>
    </ligand>
</feature>
<feature type="binding site" evidence="1">
    <location>
        <position position="14"/>
    </location>
    <ligand>
        <name>sn-glycerol 3-phosphate</name>
        <dbReference type="ChEBI" id="CHEBI:57597"/>
    </ligand>
</feature>
<feature type="binding site" evidence="1">
    <location>
        <position position="15"/>
    </location>
    <ligand>
        <name>ATP</name>
        <dbReference type="ChEBI" id="CHEBI:30616"/>
    </ligand>
</feature>
<feature type="binding site" evidence="1">
    <location>
        <position position="16"/>
    </location>
    <ligand>
        <name>ATP</name>
        <dbReference type="ChEBI" id="CHEBI:30616"/>
    </ligand>
</feature>
<feature type="binding site" evidence="1">
    <location>
        <position position="18"/>
    </location>
    <ligand>
        <name>ADP</name>
        <dbReference type="ChEBI" id="CHEBI:456216"/>
    </ligand>
</feature>
<feature type="binding site" evidence="1">
    <location>
        <position position="84"/>
    </location>
    <ligand>
        <name>glycerol</name>
        <dbReference type="ChEBI" id="CHEBI:17754"/>
    </ligand>
</feature>
<feature type="binding site" evidence="1">
    <location>
        <position position="84"/>
    </location>
    <ligand>
        <name>sn-glycerol 3-phosphate</name>
        <dbReference type="ChEBI" id="CHEBI:57597"/>
    </ligand>
</feature>
<feature type="binding site" evidence="1">
    <location>
        <position position="85"/>
    </location>
    <ligand>
        <name>glycerol</name>
        <dbReference type="ChEBI" id="CHEBI:17754"/>
    </ligand>
</feature>
<feature type="binding site" evidence="1">
    <location>
        <position position="85"/>
    </location>
    <ligand>
        <name>sn-glycerol 3-phosphate</name>
        <dbReference type="ChEBI" id="CHEBI:57597"/>
    </ligand>
</feature>
<feature type="binding site" evidence="1">
    <location>
        <position position="136"/>
    </location>
    <ligand>
        <name>glycerol</name>
        <dbReference type="ChEBI" id="CHEBI:17754"/>
    </ligand>
</feature>
<feature type="binding site" evidence="1">
    <location>
        <position position="136"/>
    </location>
    <ligand>
        <name>sn-glycerol 3-phosphate</name>
        <dbReference type="ChEBI" id="CHEBI:57597"/>
    </ligand>
</feature>
<feature type="binding site" evidence="1">
    <location>
        <position position="246"/>
    </location>
    <ligand>
        <name>glycerol</name>
        <dbReference type="ChEBI" id="CHEBI:17754"/>
    </ligand>
</feature>
<feature type="binding site" evidence="1">
    <location>
        <position position="246"/>
    </location>
    <ligand>
        <name>sn-glycerol 3-phosphate</name>
        <dbReference type="ChEBI" id="CHEBI:57597"/>
    </ligand>
</feature>
<feature type="binding site" evidence="1">
    <location>
        <position position="247"/>
    </location>
    <ligand>
        <name>glycerol</name>
        <dbReference type="ChEBI" id="CHEBI:17754"/>
    </ligand>
</feature>
<feature type="binding site" evidence="1">
    <location>
        <position position="268"/>
    </location>
    <ligand>
        <name>ADP</name>
        <dbReference type="ChEBI" id="CHEBI:456216"/>
    </ligand>
</feature>
<feature type="binding site" evidence="1">
    <location>
        <position position="268"/>
    </location>
    <ligand>
        <name>ATP</name>
        <dbReference type="ChEBI" id="CHEBI:30616"/>
    </ligand>
</feature>
<feature type="binding site" evidence="1">
    <location>
        <position position="311"/>
    </location>
    <ligand>
        <name>ADP</name>
        <dbReference type="ChEBI" id="CHEBI:456216"/>
    </ligand>
</feature>
<feature type="binding site" evidence="1">
    <location>
        <position position="311"/>
    </location>
    <ligand>
        <name>ATP</name>
        <dbReference type="ChEBI" id="CHEBI:30616"/>
    </ligand>
</feature>
<feature type="binding site" evidence="1">
    <location>
        <position position="315"/>
    </location>
    <ligand>
        <name>ATP</name>
        <dbReference type="ChEBI" id="CHEBI:30616"/>
    </ligand>
</feature>
<feature type="binding site" evidence="1">
    <location>
        <position position="412"/>
    </location>
    <ligand>
        <name>ADP</name>
        <dbReference type="ChEBI" id="CHEBI:456216"/>
    </ligand>
</feature>
<feature type="binding site" evidence="1">
    <location>
        <position position="412"/>
    </location>
    <ligand>
        <name>ATP</name>
        <dbReference type="ChEBI" id="CHEBI:30616"/>
    </ligand>
</feature>
<feature type="binding site" evidence="1">
    <location>
        <position position="416"/>
    </location>
    <ligand>
        <name>ADP</name>
        <dbReference type="ChEBI" id="CHEBI:456216"/>
    </ligand>
</feature>
<organism>
    <name type="scientific">Escherichia coli O45:K1 (strain S88 / ExPEC)</name>
    <dbReference type="NCBI Taxonomy" id="585035"/>
    <lineage>
        <taxon>Bacteria</taxon>
        <taxon>Pseudomonadati</taxon>
        <taxon>Pseudomonadota</taxon>
        <taxon>Gammaproteobacteria</taxon>
        <taxon>Enterobacterales</taxon>
        <taxon>Enterobacteriaceae</taxon>
        <taxon>Escherichia</taxon>
    </lineage>
</organism>
<keyword id="KW-0021">Allosteric enzyme</keyword>
<keyword id="KW-0067">ATP-binding</keyword>
<keyword id="KW-0319">Glycerol metabolism</keyword>
<keyword id="KW-0418">Kinase</keyword>
<keyword id="KW-0479">Metal-binding</keyword>
<keyword id="KW-0547">Nucleotide-binding</keyword>
<keyword id="KW-1185">Reference proteome</keyword>
<keyword id="KW-0808">Transferase</keyword>
<keyword id="KW-0862">Zinc</keyword>
<proteinExistence type="inferred from homology"/>